<accession>Q2FF64</accession>
<evidence type="ECO:0000255" key="1">
    <source>
        <dbReference type="HAMAP-Rule" id="MF_01031"/>
    </source>
</evidence>
<feature type="chain" id="PRO_1000063848" description="3-isopropylmalate dehydratase small subunit">
    <location>
        <begin position="1"/>
        <end position="190"/>
    </location>
</feature>
<comment type="function">
    <text evidence="1">Catalyzes the isomerization between 2-isopropylmalate and 3-isopropylmalate, via the formation of 2-isopropylmaleate.</text>
</comment>
<comment type="catalytic activity">
    <reaction evidence="1">
        <text>(2R,3S)-3-isopropylmalate = (2S)-2-isopropylmalate</text>
        <dbReference type="Rhea" id="RHEA:32287"/>
        <dbReference type="ChEBI" id="CHEBI:1178"/>
        <dbReference type="ChEBI" id="CHEBI:35121"/>
        <dbReference type="EC" id="4.2.1.33"/>
    </reaction>
</comment>
<comment type="pathway">
    <text evidence="1">Amino-acid biosynthesis; L-leucine biosynthesis; L-leucine from 3-methyl-2-oxobutanoate: step 2/4.</text>
</comment>
<comment type="subunit">
    <text evidence="1">Heterodimer of LeuC and LeuD.</text>
</comment>
<comment type="similarity">
    <text evidence="1">Belongs to the LeuD family. LeuD type 1 subfamily.</text>
</comment>
<dbReference type="EC" id="4.2.1.33" evidence="1"/>
<dbReference type="EMBL" id="CP000255">
    <property type="protein sequence ID" value="ABD21311.1"/>
    <property type="molecule type" value="Genomic_DNA"/>
</dbReference>
<dbReference type="RefSeq" id="WP_000718955.1">
    <property type="nucleotide sequence ID" value="NZ_CP027476.1"/>
</dbReference>
<dbReference type="SMR" id="Q2FF64"/>
<dbReference type="KEGG" id="saa:SAUSA300_2013"/>
<dbReference type="HOGENOM" id="CLU_081378_0_3_9"/>
<dbReference type="OMA" id="FGQHLFH"/>
<dbReference type="UniPathway" id="UPA00048">
    <property type="reaction ID" value="UER00071"/>
</dbReference>
<dbReference type="Proteomes" id="UP000001939">
    <property type="component" value="Chromosome"/>
</dbReference>
<dbReference type="GO" id="GO:0009316">
    <property type="term" value="C:3-isopropylmalate dehydratase complex"/>
    <property type="evidence" value="ECO:0007669"/>
    <property type="project" value="InterPro"/>
</dbReference>
<dbReference type="GO" id="GO:0003861">
    <property type="term" value="F:3-isopropylmalate dehydratase activity"/>
    <property type="evidence" value="ECO:0007669"/>
    <property type="project" value="UniProtKB-UniRule"/>
</dbReference>
<dbReference type="GO" id="GO:0009098">
    <property type="term" value="P:L-leucine biosynthetic process"/>
    <property type="evidence" value="ECO:0007669"/>
    <property type="project" value="UniProtKB-UniRule"/>
</dbReference>
<dbReference type="CDD" id="cd01577">
    <property type="entry name" value="IPMI_Swivel"/>
    <property type="match status" value="1"/>
</dbReference>
<dbReference type="FunFam" id="3.20.19.10:FF:000003">
    <property type="entry name" value="3-isopropylmalate dehydratase small subunit"/>
    <property type="match status" value="1"/>
</dbReference>
<dbReference type="Gene3D" id="3.20.19.10">
    <property type="entry name" value="Aconitase, domain 4"/>
    <property type="match status" value="1"/>
</dbReference>
<dbReference type="HAMAP" id="MF_01031">
    <property type="entry name" value="LeuD_type1"/>
    <property type="match status" value="1"/>
</dbReference>
<dbReference type="InterPro" id="IPR004431">
    <property type="entry name" value="3-IsopropMal_deHydase_ssu"/>
</dbReference>
<dbReference type="InterPro" id="IPR015928">
    <property type="entry name" value="Aconitase/3IPM_dehydase_swvl"/>
</dbReference>
<dbReference type="InterPro" id="IPR000573">
    <property type="entry name" value="AconitaseA/IPMdHydase_ssu_swvl"/>
</dbReference>
<dbReference type="InterPro" id="IPR033940">
    <property type="entry name" value="IPMI_Swivel"/>
</dbReference>
<dbReference type="InterPro" id="IPR050075">
    <property type="entry name" value="LeuD"/>
</dbReference>
<dbReference type="NCBIfam" id="TIGR00171">
    <property type="entry name" value="leuD"/>
    <property type="match status" value="1"/>
</dbReference>
<dbReference type="NCBIfam" id="NF002458">
    <property type="entry name" value="PRK01641.1"/>
    <property type="match status" value="1"/>
</dbReference>
<dbReference type="PANTHER" id="PTHR43345:SF5">
    <property type="entry name" value="3-ISOPROPYLMALATE DEHYDRATASE SMALL SUBUNIT"/>
    <property type="match status" value="1"/>
</dbReference>
<dbReference type="PANTHER" id="PTHR43345">
    <property type="entry name" value="3-ISOPROPYLMALATE DEHYDRATASE SMALL SUBUNIT 2-RELATED-RELATED"/>
    <property type="match status" value="1"/>
</dbReference>
<dbReference type="Pfam" id="PF00694">
    <property type="entry name" value="Aconitase_C"/>
    <property type="match status" value="1"/>
</dbReference>
<dbReference type="SUPFAM" id="SSF52016">
    <property type="entry name" value="LeuD/IlvD-like"/>
    <property type="match status" value="1"/>
</dbReference>
<sequence length="190" mass="21579">MAAIKPITTYKGKIVPLFNDNIDTDQIIPKVHLKRISKSGFGPFAFDEWRYLPDGSDNPDFNPNKPQYKGASILITGDNFGCGSSREHAAWALKDYGFHIIIAGSFSDIFYMNCTKNAMLPIVLEKSAREHLAQYVEIEVDLPNQTVSSPDKRFHFEIDETWKNKLVNGLDDIAITLQYESLIEKYEKSL</sequence>
<protein>
    <recommendedName>
        <fullName evidence="1">3-isopropylmalate dehydratase small subunit</fullName>
        <ecNumber evidence="1">4.2.1.33</ecNumber>
    </recommendedName>
    <alternativeName>
        <fullName evidence="1">Alpha-IPM isomerase</fullName>
        <shortName evidence="1">IPMI</shortName>
    </alternativeName>
    <alternativeName>
        <fullName evidence="1">Isopropylmalate isomerase</fullName>
    </alternativeName>
</protein>
<organism>
    <name type="scientific">Staphylococcus aureus (strain USA300)</name>
    <dbReference type="NCBI Taxonomy" id="367830"/>
    <lineage>
        <taxon>Bacteria</taxon>
        <taxon>Bacillati</taxon>
        <taxon>Bacillota</taxon>
        <taxon>Bacilli</taxon>
        <taxon>Bacillales</taxon>
        <taxon>Staphylococcaceae</taxon>
        <taxon>Staphylococcus</taxon>
    </lineage>
</organism>
<proteinExistence type="inferred from homology"/>
<name>LEUD_STAA3</name>
<gene>
    <name evidence="1" type="primary">leuD</name>
    <name type="ordered locus">SAUSA300_2013</name>
</gene>
<reference key="1">
    <citation type="journal article" date="2006" name="Lancet">
        <title>Complete genome sequence of USA300, an epidemic clone of community-acquired meticillin-resistant Staphylococcus aureus.</title>
        <authorList>
            <person name="Diep B.A."/>
            <person name="Gill S.R."/>
            <person name="Chang R.F."/>
            <person name="Phan T.H."/>
            <person name="Chen J.H."/>
            <person name="Davidson M.G."/>
            <person name="Lin F."/>
            <person name="Lin J."/>
            <person name="Carleton H.A."/>
            <person name="Mongodin E.F."/>
            <person name="Sensabaugh G.F."/>
            <person name="Perdreau-Remington F."/>
        </authorList>
    </citation>
    <scope>NUCLEOTIDE SEQUENCE [LARGE SCALE GENOMIC DNA]</scope>
    <source>
        <strain>USA300</strain>
    </source>
</reference>
<keyword id="KW-0028">Amino-acid biosynthesis</keyword>
<keyword id="KW-0100">Branched-chain amino acid biosynthesis</keyword>
<keyword id="KW-0432">Leucine biosynthesis</keyword>
<keyword id="KW-0456">Lyase</keyword>